<feature type="chain" id="PRO_0000252776" description="Ketol-acid reductoisomerase (NADP(+))">
    <location>
        <begin position="1"/>
        <end position="339"/>
    </location>
</feature>
<feature type="domain" description="KARI N-terminal Rossmann" evidence="2">
    <location>
        <begin position="1"/>
        <end position="182"/>
    </location>
</feature>
<feature type="domain" description="KARI C-terminal knotted" evidence="3">
    <location>
        <begin position="183"/>
        <end position="328"/>
    </location>
</feature>
<feature type="active site" evidence="1">
    <location>
        <position position="108"/>
    </location>
</feature>
<feature type="binding site" evidence="1">
    <location>
        <begin position="24"/>
        <end position="27"/>
    </location>
    <ligand>
        <name>NADP(+)</name>
        <dbReference type="ChEBI" id="CHEBI:58349"/>
    </ligand>
</feature>
<feature type="binding site" evidence="1">
    <location>
        <position position="48"/>
    </location>
    <ligand>
        <name>NADP(+)</name>
        <dbReference type="ChEBI" id="CHEBI:58349"/>
    </ligand>
</feature>
<feature type="binding site" evidence="1">
    <location>
        <position position="51"/>
    </location>
    <ligand>
        <name>NADP(+)</name>
        <dbReference type="ChEBI" id="CHEBI:58349"/>
    </ligand>
</feature>
<feature type="binding site" evidence="1">
    <location>
        <position position="53"/>
    </location>
    <ligand>
        <name>NADP(+)</name>
        <dbReference type="ChEBI" id="CHEBI:58349"/>
    </ligand>
</feature>
<feature type="binding site" evidence="1">
    <location>
        <begin position="83"/>
        <end position="86"/>
    </location>
    <ligand>
        <name>NADP(+)</name>
        <dbReference type="ChEBI" id="CHEBI:58349"/>
    </ligand>
</feature>
<feature type="binding site" evidence="1">
    <location>
        <position position="134"/>
    </location>
    <ligand>
        <name>NADP(+)</name>
        <dbReference type="ChEBI" id="CHEBI:58349"/>
    </ligand>
</feature>
<feature type="binding site" evidence="1">
    <location>
        <position position="191"/>
    </location>
    <ligand>
        <name>Mg(2+)</name>
        <dbReference type="ChEBI" id="CHEBI:18420"/>
        <label>1</label>
    </ligand>
</feature>
<feature type="binding site" evidence="1">
    <location>
        <position position="191"/>
    </location>
    <ligand>
        <name>Mg(2+)</name>
        <dbReference type="ChEBI" id="CHEBI:18420"/>
        <label>2</label>
    </ligand>
</feature>
<feature type="binding site" evidence="1">
    <location>
        <position position="195"/>
    </location>
    <ligand>
        <name>Mg(2+)</name>
        <dbReference type="ChEBI" id="CHEBI:18420"/>
        <label>1</label>
    </ligand>
</feature>
<feature type="binding site" evidence="1">
    <location>
        <position position="227"/>
    </location>
    <ligand>
        <name>Mg(2+)</name>
        <dbReference type="ChEBI" id="CHEBI:18420"/>
        <label>2</label>
    </ligand>
</feature>
<feature type="binding site" evidence="1">
    <location>
        <position position="231"/>
    </location>
    <ligand>
        <name>Mg(2+)</name>
        <dbReference type="ChEBI" id="CHEBI:18420"/>
        <label>2</label>
    </ligand>
</feature>
<feature type="binding site" evidence="1">
    <location>
        <position position="252"/>
    </location>
    <ligand>
        <name>substrate</name>
    </ligand>
</feature>
<organism>
    <name type="scientific">Rhizobium etli (strain ATCC 51251 / DSM 11541 / JCM 21823 / NBRC 15573 / CFN 42)</name>
    <dbReference type="NCBI Taxonomy" id="347834"/>
    <lineage>
        <taxon>Bacteria</taxon>
        <taxon>Pseudomonadati</taxon>
        <taxon>Pseudomonadota</taxon>
        <taxon>Alphaproteobacteria</taxon>
        <taxon>Hyphomicrobiales</taxon>
        <taxon>Rhizobiaceae</taxon>
        <taxon>Rhizobium/Agrobacterium group</taxon>
        <taxon>Rhizobium</taxon>
    </lineage>
</organism>
<name>ILVC_RHIEC</name>
<comment type="function">
    <text evidence="1">Involved in the biosynthesis of branched-chain amino acids (BCAA). Catalyzes an alkyl-migration followed by a ketol-acid reduction of (S)-2-acetolactate (S2AL) to yield (R)-2,3-dihydroxy-isovalerate. In the isomerase reaction, S2AL is rearranged via a Mg-dependent methyl migration to produce 3-hydroxy-3-methyl-2-ketobutyrate (HMKB). In the reductase reaction, this 2-ketoacid undergoes a metal-dependent reduction by NADPH to yield (R)-2,3-dihydroxy-isovalerate.</text>
</comment>
<comment type="catalytic activity">
    <reaction evidence="1">
        <text>(2R)-2,3-dihydroxy-3-methylbutanoate + NADP(+) = (2S)-2-acetolactate + NADPH + H(+)</text>
        <dbReference type="Rhea" id="RHEA:22068"/>
        <dbReference type="ChEBI" id="CHEBI:15378"/>
        <dbReference type="ChEBI" id="CHEBI:49072"/>
        <dbReference type="ChEBI" id="CHEBI:57783"/>
        <dbReference type="ChEBI" id="CHEBI:58349"/>
        <dbReference type="ChEBI" id="CHEBI:58476"/>
        <dbReference type="EC" id="1.1.1.86"/>
    </reaction>
</comment>
<comment type="catalytic activity">
    <reaction evidence="1">
        <text>(2R,3R)-2,3-dihydroxy-3-methylpentanoate + NADP(+) = (S)-2-ethyl-2-hydroxy-3-oxobutanoate + NADPH + H(+)</text>
        <dbReference type="Rhea" id="RHEA:13493"/>
        <dbReference type="ChEBI" id="CHEBI:15378"/>
        <dbReference type="ChEBI" id="CHEBI:49256"/>
        <dbReference type="ChEBI" id="CHEBI:49258"/>
        <dbReference type="ChEBI" id="CHEBI:57783"/>
        <dbReference type="ChEBI" id="CHEBI:58349"/>
        <dbReference type="EC" id="1.1.1.86"/>
    </reaction>
</comment>
<comment type="cofactor">
    <cofactor evidence="1">
        <name>Mg(2+)</name>
        <dbReference type="ChEBI" id="CHEBI:18420"/>
    </cofactor>
    <text evidence="1">Binds 2 magnesium ions per subunit.</text>
</comment>
<comment type="pathway">
    <text evidence="1">Amino-acid biosynthesis; L-isoleucine biosynthesis; L-isoleucine from 2-oxobutanoate: step 2/4.</text>
</comment>
<comment type="pathway">
    <text evidence="1">Amino-acid biosynthesis; L-valine biosynthesis; L-valine from pyruvate: step 2/4.</text>
</comment>
<comment type="similarity">
    <text evidence="1">Belongs to the ketol-acid reductoisomerase family.</text>
</comment>
<accession>Q2K6M2</accession>
<evidence type="ECO:0000255" key="1">
    <source>
        <dbReference type="HAMAP-Rule" id="MF_00435"/>
    </source>
</evidence>
<evidence type="ECO:0000255" key="2">
    <source>
        <dbReference type="PROSITE-ProRule" id="PRU01197"/>
    </source>
</evidence>
<evidence type="ECO:0000255" key="3">
    <source>
        <dbReference type="PROSITE-ProRule" id="PRU01198"/>
    </source>
</evidence>
<proteinExistence type="inferred from homology"/>
<gene>
    <name evidence="1" type="primary">ilvC</name>
    <name type="ordered locus">RHE_CH02744</name>
</gene>
<reference key="1">
    <citation type="journal article" date="2006" name="Proc. Natl. Acad. Sci. U.S.A.">
        <title>The partitioned Rhizobium etli genome: genetic and metabolic redundancy in seven interacting replicons.</title>
        <authorList>
            <person name="Gonzalez V."/>
            <person name="Santamaria R.I."/>
            <person name="Bustos P."/>
            <person name="Hernandez-Gonzalez I."/>
            <person name="Medrano-Soto A."/>
            <person name="Moreno-Hagelsieb G."/>
            <person name="Janga S.C."/>
            <person name="Ramirez M.A."/>
            <person name="Jimenez-Jacinto V."/>
            <person name="Collado-Vides J."/>
            <person name="Davila G."/>
        </authorList>
    </citation>
    <scope>NUCLEOTIDE SEQUENCE [LARGE SCALE GENOMIC DNA]</scope>
    <source>
        <strain>ATCC 51251 / DSM 11541 / JCM 21823 / NBRC 15573 / CFN 42</strain>
    </source>
</reference>
<protein>
    <recommendedName>
        <fullName evidence="1">Ketol-acid reductoisomerase (NADP(+))</fullName>
        <shortName evidence="1">KARI</shortName>
        <ecNumber evidence="1">1.1.1.86</ecNumber>
    </recommendedName>
    <alternativeName>
        <fullName evidence="1">Acetohydroxy-acid isomeroreductase</fullName>
        <shortName evidence="1">AHIR</shortName>
    </alternativeName>
    <alternativeName>
        <fullName evidence="1">Alpha-keto-beta-hydroxylacyl reductoisomerase</fullName>
    </alternativeName>
    <alternativeName>
        <fullName evidence="1">Ketol-acid reductoisomerase type 1</fullName>
    </alternativeName>
    <alternativeName>
        <fullName evidence="1">Ketol-acid reductoisomerase type I</fullName>
    </alternativeName>
</protein>
<dbReference type="EC" id="1.1.1.86" evidence="1"/>
<dbReference type="EMBL" id="CP000133">
    <property type="protein sequence ID" value="ABC91514.1"/>
    <property type="molecule type" value="Genomic_DNA"/>
</dbReference>
<dbReference type="RefSeq" id="WP_004668557.1">
    <property type="nucleotide sequence ID" value="NC_007761.1"/>
</dbReference>
<dbReference type="SMR" id="Q2K6M2"/>
<dbReference type="GeneID" id="66138212"/>
<dbReference type="KEGG" id="ret:RHE_CH02744"/>
<dbReference type="eggNOG" id="COG0059">
    <property type="taxonomic scope" value="Bacteria"/>
</dbReference>
<dbReference type="HOGENOM" id="CLU_033821_0_1_5"/>
<dbReference type="OrthoDB" id="9804088at2"/>
<dbReference type="UniPathway" id="UPA00047">
    <property type="reaction ID" value="UER00056"/>
</dbReference>
<dbReference type="UniPathway" id="UPA00049">
    <property type="reaction ID" value="UER00060"/>
</dbReference>
<dbReference type="Proteomes" id="UP000001936">
    <property type="component" value="Chromosome"/>
</dbReference>
<dbReference type="GO" id="GO:0005829">
    <property type="term" value="C:cytosol"/>
    <property type="evidence" value="ECO:0007669"/>
    <property type="project" value="TreeGrafter"/>
</dbReference>
<dbReference type="GO" id="GO:0004455">
    <property type="term" value="F:ketol-acid reductoisomerase activity"/>
    <property type="evidence" value="ECO:0007669"/>
    <property type="project" value="UniProtKB-UniRule"/>
</dbReference>
<dbReference type="GO" id="GO:0000287">
    <property type="term" value="F:magnesium ion binding"/>
    <property type="evidence" value="ECO:0007669"/>
    <property type="project" value="UniProtKB-UniRule"/>
</dbReference>
<dbReference type="GO" id="GO:0050661">
    <property type="term" value="F:NADP binding"/>
    <property type="evidence" value="ECO:0007669"/>
    <property type="project" value="InterPro"/>
</dbReference>
<dbReference type="GO" id="GO:0009097">
    <property type="term" value="P:isoleucine biosynthetic process"/>
    <property type="evidence" value="ECO:0007669"/>
    <property type="project" value="UniProtKB-UniRule"/>
</dbReference>
<dbReference type="GO" id="GO:0009099">
    <property type="term" value="P:L-valine biosynthetic process"/>
    <property type="evidence" value="ECO:0007669"/>
    <property type="project" value="UniProtKB-UniRule"/>
</dbReference>
<dbReference type="FunFam" id="3.40.50.720:FF:000023">
    <property type="entry name" value="Ketol-acid reductoisomerase (NADP(+))"/>
    <property type="match status" value="1"/>
</dbReference>
<dbReference type="Gene3D" id="6.10.240.10">
    <property type="match status" value="1"/>
</dbReference>
<dbReference type="Gene3D" id="3.40.50.720">
    <property type="entry name" value="NAD(P)-binding Rossmann-like Domain"/>
    <property type="match status" value="1"/>
</dbReference>
<dbReference type="HAMAP" id="MF_00435">
    <property type="entry name" value="IlvC"/>
    <property type="match status" value="1"/>
</dbReference>
<dbReference type="InterPro" id="IPR008927">
    <property type="entry name" value="6-PGluconate_DH-like_C_sf"/>
</dbReference>
<dbReference type="InterPro" id="IPR013023">
    <property type="entry name" value="KARI"/>
</dbReference>
<dbReference type="InterPro" id="IPR000506">
    <property type="entry name" value="KARI_C"/>
</dbReference>
<dbReference type="InterPro" id="IPR013116">
    <property type="entry name" value="KARI_N"/>
</dbReference>
<dbReference type="InterPro" id="IPR014359">
    <property type="entry name" value="KARI_prok"/>
</dbReference>
<dbReference type="InterPro" id="IPR036291">
    <property type="entry name" value="NAD(P)-bd_dom_sf"/>
</dbReference>
<dbReference type="NCBIfam" id="TIGR00465">
    <property type="entry name" value="ilvC"/>
    <property type="match status" value="1"/>
</dbReference>
<dbReference type="NCBIfam" id="NF004017">
    <property type="entry name" value="PRK05479.1"/>
    <property type="match status" value="1"/>
</dbReference>
<dbReference type="NCBIfam" id="NF009940">
    <property type="entry name" value="PRK13403.1"/>
    <property type="match status" value="1"/>
</dbReference>
<dbReference type="PANTHER" id="PTHR21371">
    <property type="entry name" value="KETOL-ACID REDUCTOISOMERASE, MITOCHONDRIAL"/>
    <property type="match status" value="1"/>
</dbReference>
<dbReference type="PANTHER" id="PTHR21371:SF1">
    <property type="entry name" value="KETOL-ACID REDUCTOISOMERASE, MITOCHONDRIAL"/>
    <property type="match status" value="1"/>
</dbReference>
<dbReference type="Pfam" id="PF01450">
    <property type="entry name" value="KARI_C"/>
    <property type="match status" value="1"/>
</dbReference>
<dbReference type="Pfam" id="PF07991">
    <property type="entry name" value="KARI_N"/>
    <property type="match status" value="1"/>
</dbReference>
<dbReference type="PIRSF" id="PIRSF000116">
    <property type="entry name" value="IlvC_gammaproteo"/>
    <property type="match status" value="1"/>
</dbReference>
<dbReference type="SUPFAM" id="SSF48179">
    <property type="entry name" value="6-phosphogluconate dehydrogenase C-terminal domain-like"/>
    <property type="match status" value="1"/>
</dbReference>
<dbReference type="SUPFAM" id="SSF51735">
    <property type="entry name" value="NAD(P)-binding Rossmann-fold domains"/>
    <property type="match status" value="1"/>
</dbReference>
<dbReference type="PROSITE" id="PS51851">
    <property type="entry name" value="KARI_C"/>
    <property type="match status" value="1"/>
</dbReference>
<dbReference type="PROSITE" id="PS51850">
    <property type="entry name" value="KARI_N"/>
    <property type="match status" value="1"/>
</dbReference>
<sequence>MRVYYDRDADLNLIKAKKVAVIGYGSQGRAHALNLKDSGAQNLVIALKAGSPTVKKAEADGFKVMTVAEAAGWADLMMMATPDELQADIYKADIAPNIRDGAAIAFAHGLNVHFGLIEPKASVDVVMIAPKGPGHTVRGEYQKGGGVPCLVAVHQNASGNALELALSYACGVGGGRSGIIETNFREECETDLFGEQVVLCGGLVELIRAGFETLTEAGYAPEMAYFECLHEVKLIVDLIYEGGIANMNYSISNTAEWGEYVTGPRIITEETKAEMKRVLKDIQTGKFTSEWMQEYRSGAARFKGIRRNNDSHQIEEVGAKLRGMMPWIGKNKLVDKSVN</sequence>
<keyword id="KW-0028">Amino-acid biosynthesis</keyword>
<keyword id="KW-0100">Branched-chain amino acid biosynthesis</keyword>
<keyword id="KW-0460">Magnesium</keyword>
<keyword id="KW-0479">Metal-binding</keyword>
<keyword id="KW-0521">NADP</keyword>
<keyword id="KW-0560">Oxidoreductase</keyword>
<keyword id="KW-1185">Reference proteome</keyword>